<feature type="chain" id="PRO_0000425457" description="Insulinoma-associated protein 1">
    <location>
        <begin position="1"/>
        <end position="441"/>
    </location>
</feature>
<feature type="zinc finger region" description="C2H2-type 1" evidence="3">
    <location>
        <begin position="258"/>
        <end position="280"/>
    </location>
</feature>
<feature type="zinc finger region" description="C2H2-type 2" evidence="3">
    <location>
        <begin position="317"/>
        <end position="339"/>
    </location>
</feature>
<feature type="zinc finger region" description="C2H2-type 3" evidence="3">
    <location>
        <begin position="372"/>
        <end position="395"/>
    </location>
</feature>
<feature type="zinc finger region" description="C2H2-type 4" evidence="3">
    <location>
        <begin position="400"/>
        <end position="423"/>
    </location>
</feature>
<feature type="region of interest" description="Disordered" evidence="4">
    <location>
        <begin position="1"/>
        <end position="31"/>
    </location>
</feature>
<feature type="region of interest" description="SNAG domain" evidence="2">
    <location>
        <begin position="1"/>
        <end position="20"/>
    </location>
</feature>
<feature type="region of interest" description="Disordered" evidence="4">
    <location>
        <begin position="43"/>
        <end position="189"/>
    </location>
</feature>
<feature type="region of interest" description="Disordered" evidence="4">
    <location>
        <begin position="205"/>
        <end position="224"/>
    </location>
</feature>
<feature type="region of interest" description="Disordered" evidence="4">
    <location>
        <begin position="278"/>
        <end position="316"/>
    </location>
</feature>
<feature type="compositionally biased region" description="Basic residues" evidence="4">
    <location>
        <begin position="1"/>
        <end position="12"/>
    </location>
</feature>
<feature type="compositionally biased region" description="Basic and acidic residues" evidence="4">
    <location>
        <begin position="19"/>
        <end position="28"/>
    </location>
</feature>
<feature type="compositionally biased region" description="Polar residues" evidence="4">
    <location>
        <begin position="74"/>
        <end position="83"/>
    </location>
</feature>
<feature type="compositionally biased region" description="Basic and acidic residues" evidence="4">
    <location>
        <begin position="89"/>
        <end position="98"/>
    </location>
</feature>
<feature type="compositionally biased region" description="Low complexity" evidence="4">
    <location>
        <begin position="138"/>
        <end position="147"/>
    </location>
</feature>
<feature type="compositionally biased region" description="Low complexity" evidence="4">
    <location>
        <begin position="169"/>
        <end position="180"/>
    </location>
</feature>
<feature type="compositionally biased region" description="Basic and acidic residues" evidence="4">
    <location>
        <begin position="292"/>
        <end position="302"/>
    </location>
</feature>
<feature type="sequence conflict" description="In Ref. 2; AAI35651/AAI21258." evidence="5" ref="2">
    <original>A</original>
    <variation>V</variation>
    <location>
        <position position="307"/>
    </location>
</feature>
<reference key="1">
    <citation type="journal article" date="2010" name="Science">
        <title>The genome of the Western clawed frog Xenopus tropicalis.</title>
        <authorList>
            <person name="Hellsten U."/>
            <person name="Harland R.M."/>
            <person name="Gilchrist M.J."/>
            <person name="Hendrix D."/>
            <person name="Jurka J."/>
            <person name="Kapitonov V."/>
            <person name="Ovcharenko I."/>
            <person name="Putnam N.H."/>
            <person name="Shu S."/>
            <person name="Taher L."/>
            <person name="Blitz I.L."/>
            <person name="Blumberg B."/>
            <person name="Dichmann D.S."/>
            <person name="Dubchak I."/>
            <person name="Amaya E."/>
            <person name="Detter J.C."/>
            <person name="Fletcher R."/>
            <person name="Gerhard D.S."/>
            <person name="Goodstein D."/>
            <person name="Graves T."/>
            <person name="Grigoriev I.V."/>
            <person name="Grimwood J."/>
            <person name="Kawashima T."/>
            <person name="Lindquist E."/>
            <person name="Lucas S.M."/>
            <person name="Mead P.E."/>
            <person name="Mitros T."/>
            <person name="Ogino H."/>
            <person name="Ohta Y."/>
            <person name="Poliakov A.V."/>
            <person name="Pollet N."/>
            <person name="Robert J."/>
            <person name="Salamov A."/>
            <person name="Sater A.K."/>
            <person name="Schmutz J."/>
            <person name="Terry A."/>
            <person name="Vize P.D."/>
            <person name="Warren W.C."/>
            <person name="Wells D."/>
            <person name="Wills A."/>
            <person name="Wilson R.K."/>
            <person name="Zimmerman L.B."/>
            <person name="Zorn A.M."/>
            <person name="Grainger R."/>
            <person name="Grammer T."/>
            <person name="Khokha M.K."/>
            <person name="Richardson P.M."/>
            <person name="Rokhsar D.S."/>
        </authorList>
    </citation>
    <scope>NUCLEOTIDE SEQUENCE [LARGE SCALE GENOMIC DNA]</scope>
</reference>
<reference key="2">
    <citation type="submission" date="2007-03" db="EMBL/GenBank/DDBJ databases">
        <authorList>
            <consortium name="NIH - Xenopus Gene Collection (XGC) project"/>
        </authorList>
    </citation>
    <scope>NUCLEOTIDE SEQUENCE [LARGE SCALE MRNA]</scope>
    <source>
        <tissue>Brain</tissue>
        <tissue>Embryo</tissue>
    </source>
</reference>
<comment type="function">
    <text evidence="1">May act as a transcriptional regulator. Plays a role in noradrenergic neuron, pancreatic and gastrointestinal endocrine cells differentiation during embryonic development (By similarity).</text>
</comment>
<comment type="subcellular location">
    <subcellularLocation>
        <location evidence="2">Nucleus</location>
    </subcellularLocation>
</comment>
<comment type="similarity">
    <text evidence="5">Belongs to the INSM1 family.</text>
</comment>
<name>INSM1_XENTR</name>
<accession>A4IHR5</accession>
<accession>Q0VA44</accession>
<keyword id="KW-0217">Developmental protein</keyword>
<keyword id="KW-0221">Differentiation</keyword>
<keyword id="KW-0238">DNA-binding</keyword>
<keyword id="KW-0479">Metal-binding</keyword>
<keyword id="KW-0524">Neurogenesis</keyword>
<keyword id="KW-0539">Nucleus</keyword>
<keyword id="KW-1185">Reference proteome</keyword>
<keyword id="KW-0677">Repeat</keyword>
<keyword id="KW-0804">Transcription</keyword>
<keyword id="KW-0805">Transcription regulation</keyword>
<keyword id="KW-0862">Zinc</keyword>
<keyword id="KW-0863">Zinc-finger</keyword>
<protein>
    <recommendedName>
        <fullName>Insulinoma-associated protein 1</fullName>
    </recommendedName>
    <alternativeName>
        <fullName>Zinc finger protein IA-1</fullName>
    </alternativeName>
</protein>
<sequence length="441" mass="47965">MPKGFLVKRSRKSPPVSYRVREEEEPRGESLPGWMLLATMCPTGGAPPPCSPDRATQAPCCSSPRPPPAGQFGNPDTVQQALYSPTRPVSREQRERKYLGSPVSAESFPGLGTSSEALLYPPTGTANGHHGLALLPPVSSSSSVSRSQGKRPAPEPDSKPAAMPGTGPGATSSSAPSKPPAAKKTKAIRKLTFEDEVTTSPVLGLKIKEGPVEPPRPRAASSGPRPLGEFICQLCKEEYSDPFSLAQHKCSRIVRVEYRCPECHKVFSCPANLASHRRWHKPRPPVASTAQAKEEPLSDRDTPSPGASESGSEDGLYECPRCARKFRRQAYLRKHLLSHQAAKEPEEPGVMMFPGEEQRAKSPPSLNAQECHPCPVCGETFPGKSSQERHIRLLHSSQLYPCKYCPATFYSSPGLTRHINKCHPSENRQVILLQVPVRPAC</sequence>
<organism>
    <name type="scientific">Xenopus tropicalis</name>
    <name type="common">Western clawed frog</name>
    <name type="synonym">Silurana tropicalis</name>
    <dbReference type="NCBI Taxonomy" id="8364"/>
    <lineage>
        <taxon>Eukaryota</taxon>
        <taxon>Metazoa</taxon>
        <taxon>Chordata</taxon>
        <taxon>Craniata</taxon>
        <taxon>Vertebrata</taxon>
        <taxon>Euteleostomi</taxon>
        <taxon>Amphibia</taxon>
        <taxon>Batrachia</taxon>
        <taxon>Anura</taxon>
        <taxon>Pipoidea</taxon>
        <taxon>Pipidae</taxon>
        <taxon>Xenopodinae</taxon>
        <taxon>Xenopus</taxon>
        <taxon>Silurana</taxon>
    </lineage>
</organism>
<proteinExistence type="evidence at transcript level"/>
<evidence type="ECO:0000250" key="1"/>
<evidence type="ECO:0000250" key="2">
    <source>
        <dbReference type="UniProtKB" id="Q63ZV0"/>
    </source>
</evidence>
<evidence type="ECO:0000255" key="3">
    <source>
        <dbReference type="PROSITE-ProRule" id="PRU00042"/>
    </source>
</evidence>
<evidence type="ECO:0000256" key="4">
    <source>
        <dbReference type="SAM" id="MobiDB-lite"/>
    </source>
</evidence>
<evidence type="ECO:0000305" key="5"/>
<dbReference type="EMBL" id="AAMC01092729">
    <property type="status" value="NOT_ANNOTATED_CDS"/>
    <property type="molecule type" value="Genomic_DNA"/>
</dbReference>
<dbReference type="EMBL" id="BC121257">
    <property type="protein sequence ID" value="AAI21258.1"/>
    <property type="molecule type" value="mRNA"/>
</dbReference>
<dbReference type="EMBL" id="BC135650">
    <property type="protein sequence ID" value="AAI35651.1"/>
    <property type="molecule type" value="mRNA"/>
</dbReference>
<dbReference type="RefSeq" id="NP_001076827.1">
    <property type="nucleotide sequence ID" value="NM_001083358.1"/>
</dbReference>
<dbReference type="SMR" id="A4IHR5"/>
<dbReference type="FunCoup" id="A4IHR5">
    <property type="interactions" value="447"/>
</dbReference>
<dbReference type="STRING" id="8364.ENSXETP00000014261"/>
<dbReference type="DNASU" id="779614"/>
<dbReference type="GeneID" id="779614"/>
<dbReference type="KEGG" id="xtr:779614"/>
<dbReference type="AGR" id="Xenbase:XB-GENE-993149"/>
<dbReference type="CTD" id="3642"/>
<dbReference type="Xenbase" id="XB-GENE-993149">
    <property type="gene designation" value="insm1"/>
</dbReference>
<dbReference type="InParanoid" id="A4IHR5"/>
<dbReference type="OrthoDB" id="8953942at2759"/>
<dbReference type="Proteomes" id="UP000008143">
    <property type="component" value="Chromosome 5"/>
</dbReference>
<dbReference type="Bgee" id="ENSXETG00000040150">
    <property type="expression patterns" value="Expressed in neurula embryo and 4 other cell types or tissues"/>
</dbReference>
<dbReference type="GO" id="GO:0005634">
    <property type="term" value="C:nucleus"/>
    <property type="evidence" value="ECO:0000250"/>
    <property type="project" value="UniProtKB"/>
</dbReference>
<dbReference type="GO" id="GO:0017053">
    <property type="term" value="C:transcription repressor complex"/>
    <property type="evidence" value="ECO:0000250"/>
    <property type="project" value="UniProtKB"/>
</dbReference>
<dbReference type="GO" id="GO:0031490">
    <property type="term" value="F:chromatin DNA binding"/>
    <property type="evidence" value="ECO:0000250"/>
    <property type="project" value="UniProtKB"/>
</dbReference>
<dbReference type="GO" id="GO:0003700">
    <property type="term" value="F:DNA-binding transcription factor activity"/>
    <property type="evidence" value="ECO:0000250"/>
    <property type="project" value="UniProtKB"/>
</dbReference>
<dbReference type="GO" id="GO:0000978">
    <property type="term" value="F:RNA polymerase II cis-regulatory region sequence-specific DNA binding"/>
    <property type="evidence" value="ECO:0000250"/>
    <property type="project" value="UniProtKB"/>
</dbReference>
<dbReference type="GO" id="GO:0008270">
    <property type="term" value="F:zinc ion binding"/>
    <property type="evidence" value="ECO:0007669"/>
    <property type="project" value="UniProtKB-KW"/>
</dbReference>
<dbReference type="GO" id="GO:0031018">
    <property type="term" value="P:endocrine pancreas development"/>
    <property type="evidence" value="ECO:0000250"/>
    <property type="project" value="UniProtKB"/>
</dbReference>
<dbReference type="GO" id="GO:0035987">
    <property type="term" value="P:endodermal cell differentiation"/>
    <property type="evidence" value="ECO:0000250"/>
    <property type="project" value="UniProtKB"/>
</dbReference>
<dbReference type="GO" id="GO:0048732">
    <property type="term" value="P:gland development"/>
    <property type="evidence" value="ECO:0000250"/>
    <property type="project" value="UniProtKB"/>
</dbReference>
<dbReference type="GO" id="GO:0000122">
    <property type="term" value="P:negative regulation of transcription by RNA polymerase II"/>
    <property type="evidence" value="ECO:0000250"/>
    <property type="project" value="UniProtKB"/>
</dbReference>
<dbReference type="GO" id="GO:0007399">
    <property type="term" value="P:nervous system development"/>
    <property type="evidence" value="ECO:0007669"/>
    <property type="project" value="UniProtKB-KW"/>
</dbReference>
<dbReference type="GO" id="GO:0003310">
    <property type="term" value="P:pancreatic A cell differentiation"/>
    <property type="evidence" value="ECO:0000250"/>
    <property type="project" value="UniProtKB"/>
</dbReference>
<dbReference type="GO" id="GO:0060290">
    <property type="term" value="P:transdifferentiation"/>
    <property type="evidence" value="ECO:0000250"/>
    <property type="project" value="UniProtKB"/>
</dbReference>
<dbReference type="GO" id="GO:0003309">
    <property type="term" value="P:type B pancreatic cell differentiation"/>
    <property type="evidence" value="ECO:0000250"/>
    <property type="project" value="UniProtKB"/>
</dbReference>
<dbReference type="FunFam" id="3.30.160.60:FF:001458">
    <property type="entry name" value="INSM transcriptional repressor 1"/>
    <property type="match status" value="1"/>
</dbReference>
<dbReference type="FunFam" id="3.30.160.60:FF:000488">
    <property type="entry name" value="Insulinoma-associated protein 2"/>
    <property type="match status" value="1"/>
</dbReference>
<dbReference type="Gene3D" id="3.30.160.60">
    <property type="entry name" value="Classic Zinc Finger"/>
    <property type="match status" value="2"/>
</dbReference>
<dbReference type="InterPro" id="IPR042972">
    <property type="entry name" value="INSM1/2"/>
</dbReference>
<dbReference type="InterPro" id="IPR036236">
    <property type="entry name" value="Znf_C2H2_sf"/>
</dbReference>
<dbReference type="InterPro" id="IPR013087">
    <property type="entry name" value="Znf_C2H2_type"/>
</dbReference>
<dbReference type="PANTHER" id="PTHR15065">
    <property type="entry name" value="INSULINOMA-ASSOCIATED 1"/>
    <property type="match status" value="1"/>
</dbReference>
<dbReference type="PANTHER" id="PTHR15065:SF5">
    <property type="entry name" value="INSULINOMA-ASSOCIATED PROTEIN 1"/>
    <property type="match status" value="1"/>
</dbReference>
<dbReference type="Pfam" id="PF00096">
    <property type="entry name" value="zf-C2H2"/>
    <property type="match status" value="4"/>
</dbReference>
<dbReference type="SMART" id="SM00355">
    <property type="entry name" value="ZnF_C2H2"/>
    <property type="match status" value="5"/>
</dbReference>
<dbReference type="SUPFAM" id="SSF57667">
    <property type="entry name" value="beta-beta-alpha zinc fingers"/>
    <property type="match status" value="2"/>
</dbReference>
<dbReference type="PROSITE" id="PS00028">
    <property type="entry name" value="ZINC_FINGER_C2H2_1"/>
    <property type="match status" value="4"/>
</dbReference>
<dbReference type="PROSITE" id="PS50157">
    <property type="entry name" value="ZINC_FINGER_C2H2_2"/>
    <property type="match status" value="4"/>
</dbReference>
<gene>
    <name type="primary">insm1</name>
</gene>